<evidence type="ECO:0000255" key="1">
    <source>
        <dbReference type="HAMAP-Rule" id="MF_01698"/>
    </source>
</evidence>
<sequence length="303" mass="33488">MKMIETSLASASAALRDRVDEILAAATREDGCAPLSESFLNGLRRADDGHVHSCVMDSHDQVVGVAARDGDSAEVVVDPAFRRQGYGSFLIRHVVSQGVKNVWAHGDGAGAKAVAKALQLEQTRQLLVMAVEGDRLVESAQLQVPSGFRVLALNEAYESIPDIEQQWLRVNNEAFEWHPEQGGWDSARLAQARDTQWFRESDVLFLIDTAKRTVAGFHWTKRHGDLAEGADGEVYVVGLGSAYRRRGLGDLLIRMGLHHLEYEHARRVILYVEGDNESARRAYDALGFHVVESHVTYSPQSSS</sequence>
<gene>
    <name evidence="1" type="primary">mshD</name>
    <name type="ordered locus">DIP1911</name>
</gene>
<comment type="function">
    <text evidence="1">Catalyzes the transfer of acetyl from acetyl-CoA to desacetylmycothiol (Cys-GlcN-Ins) to form mycothiol.</text>
</comment>
<comment type="catalytic activity">
    <reaction evidence="1">
        <text>1D-myo-inositol 2-(L-cysteinylamino)-2-deoxy-alpha-D-glucopyranoside + acetyl-CoA = mycothiol + CoA + H(+)</text>
        <dbReference type="Rhea" id="RHEA:26172"/>
        <dbReference type="ChEBI" id="CHEBI:15378"/>
        <dbReference type="ChEBI" id="CHEBI:16768"/>
        <dbReference type="ChEBI" id="CHEBI:57287"/>
        <dbReference type="ChEBI" id="CHEBI:57288"/>
        <dbReference type="ChEBI" id="CHEBI:58887"/>
        <dbReference type="EC" id="2.3.1.189"/>
    </reaction>
</comment>
<comment type="subunit">
    <text evidence="1">Monomer.</text>
</comment>
<comment type="similarity">
    <text evidence="1">Belongs to the acetyltransferase family. MshD subfamily.</text>
</comment>
<protein>
    <recommendedName>
        <fullName evidence="1">Mycothiol acetyltransferase</fullName>
        <shortName evidence="1">MSH acetyltransferase</shortName>
        <ecNumber evidence="1">2.3.1.189</ecNumber>
    </recommendedName>
    <alternativeName>
        <fullName evidence="1">Mycothiol synthase</fullName>
    </alternativeName>
</protein>
<feature type="chain" id="PRO_0000400248" description="Mycothiol acetyltransferase">
    <location>
        <begin position="1"/>
        <end position="303"/>
    </location>
</feature>
<feature type="domain" description="N-acetyltransferase 1" evidence="1">
    <location>
        <begin position="6"/>
        <end position="134"/>
    </location>
</feature>
<feature type="domain" description="N-acetyltransferase 2" evidence="1">
    <location>
        <begin position="154"/>
        <end position="303"/>
    </location>
</feature>
<feature type="binding site" evidence="1">
    <location>
        <position position="37"/>
    </location>
    <ligand>
        <name>1D-myo-inositol 2-(L-cysteinylamino)-2-deoxy-alpha-D-glucopyranoside</name>
        <dbReference type="ChEBI" id="CHEBI:58887"/>
    </ligand>
</feature>
<feature type="binding site" evidence="1">
    <location>
        <begin position="75"/>
        <end position="77"/>
    </location>
    <ligand>
        <name>acetyl-CoA</name>
        <dbReference type="ChEBI" id="CHEBI:57288"/>
        <label>1</label>
    </ligand>
</feature>
<feature type="binding site" evidence="1">
    <location>
        <begin position="83"/>
        <end position="88"/>
    </location>
    <ligand>
        <name>acetyl-CoA</name>
        <dbReference type="ChEBI" id="CHEBI:57288"/>
        <label>1</label>
    </ligand>
</feature>
<feature type="binding site" evidence="1">
    <location>
        <position position="180"/>
    </location>
    <ligand>
        <name>1D-myo-inositol 2-(L-cysteinylamino)-2-deoxy-alpha-D-glucopyranoside</name>
        <dbReference type="ChEBI" id="CHEBI:58887"/>
    </ligand>
</feature>
<feature type="binding site" evidence="1">
    <location>
        <position position="221"/>
    </location>
    <ligand>
        <name>1D-myo-inositol 2-(L-cysteinylamino)-2-deoxy-alpha-D-glucopyranoside</name>
        <dbReference type="ChEBI" id="CHEBI:58887"/>
    </ligand>
</feature>
<feature type="binding site" evidence="1">
    <location>
        <position position="233"/>
    </location>
    <ligand>
        <name>1D-myo-inositol 2-(L-cysteinylamino)-2-deoxy-alpha-D-glucopyranoside</name>
        <dbReference type="ChEBI" id="CHEBI:58887"/>
    </ligand>
</feature>
<feature type="binding site" evidence="1">
    <location>
        <begin position="237"/>
        <end position="239"/>
    </location>
    <ligand>
        <name>acetyl-CoA</name>
        <dbReference type="ChEBI" id="CHEBI:57288"/>
        <label>2</label>
    </ligand>
</feature>
<feature type="binding site" evidence="1">
    <location>
        <begin position="244"/>
        <end position="250"/>
    </location>
    <ligand>
        <name>acetyl-CoA</name>
        <dbReference type="ChEBI" id="CHEBI:57288"/>
        <label>2</label>
    </ligand>
</feature>
<feature type="binding site" evidence="1">
    <location>
        <position position="271"/>
    </location>
    <ligand>
        <name>1D-myo-inositol 2-(L-cysteinylamino)-2-deoxy-alpha-D-glucopyranoside</name>
        <dbReference type="ChEBI" id="CHEBI:58887"/>
    </ligand>
</feature>
<feature type="binding site" evidence="1">
    <location>
        <begin position="276"/>
        <end position="281"/>
    </location>
    <ligand>
        <name>acetyl-CoA</name>
        <dbReference type="ChEBI" id="CHEBI:57288"/>
        <label>2</label>
    </ligand>
</feature>
<accession>Q6NFH9</accession>
<organism>
    <name type="scientific">Corynebacterium diphtheriae (strain ATCC 700971 / NCTC 13129 / Biotype gravis)</name>
    <dbReference type="NCBI Taxonomy" id="257309"/>
    <lineage>
        <taxon>Bacteria</taxon>
        <taxon>Bacillati</taxon>
        <taxon>Actinomycetota</taxon>
        <taxon>Actinomycetes</taxon>
        <taxon>Mycobacteriales</taxon>
        <taxon>Corynebacteriaceae</taxon>
        <taxon>Corynebacterium</taxon>
    </lineage>
</organism>
<keyword id="KW-0012">Acyltransferase</keyword>
<keyword id="KW-1185">Reference proteome</keyword>
<keyword id="KW-0677">Repeat</keyword>
<keyword id="KW-0808">Transferase</keyword>
<proteinExistence type="inferred from homology"/>
<name>MSHD_CORDI</name>
<reference key="1">
    <citation type="journal article" date="2003" name="Nucleic Acids Res.">
        <title>The complete genome sequence and analysis of Corynebacterium diphtheriae NCTC13129.</title>
        <authorList>
            <person name="Cerdeno-Tarraga A.-M."/>
            <person name="Efstratiou A."/>
            <person name="Dover L.G."/>
            <person name="Holden M.T.G."/>
            <person name="Pallen M.J."/>
            <person name="Bentley S.D."/>
            <person name="Besra G.S."/>
            <person name="Churcher C.M."/>
            <person name="James K.D."/>
            <person name="De Zoysa A."/>
            <person name="Chillingworth T."/>
            <person name="Cronin A."/>
            <person name="Dowd L."/>
            <person name="Feltwell T."/>
            <person name="Hamlin N."/>
            <person name="Holroyd S."/>
            <person name="Jagels K."/>
            <person name="Moule S."/>
            <person name="Quail M.A."/>
            <person name="Rabbinowitsch E."/>
            <person name="Rutherford K.M."/>
            <person name="Thomson N.R."/>
            <person name="Unwin L."/>
            <person name="Whitehead S."/>
            <person name="Barrell B.G."/>
            <person name="Parkhill J."/>
        </authorList>
    </citation>
    <scope>NUCLEOTIDE SEQUENCE [LARGE SCALE GENOMIC DNA]</scope>
    <source>
        <strain>ATCC 700971 / NCTC 13129 / Biotype gravis</strain>
    </source>
</reference>
<dbReference type="EC" id="2.3.1.189" evidence="1"/>
<dbReference type="EMBL" id="BX248359">
    <property type="protein sequence ID" value="CAE50445.1"/>
    <property type="molecule type" value="Genomic_DNA"/>
</dbReference>
<dbReference type="RefSeq" id="WP_010935426.1">
    <property type="nucleotide sequence ID" value="NC_002935.2"/>
</dbReference>
<dbReference type="SMR" id="Q6NFH9"/>
<dbReference type="STRING" id="257309.DIP1911"/>
<dbReference type="GeneID" id="29422027"/>
<dbReference type="KEGG" id="cdi:DIP1911"/>
<dbReference type="HOGENOM" id="CLU_068014_0_0_11"/>
<dbReference type="Proteomes" id="UP000002198">
    <property type="component" value="Chromosome"/>
</dbReference>
<dbReference type="GO" id="GO:0035447">
    <property type="term" value="F:mycothiol synthase activity"/>
    <property type="evidence" value="ECO:0007669"/>
    <property type="project" value="UniProtKB-UniRule"/>
</dbReference>
<dbReference type="GO" id="GO:0008999">
    <property type="term" value="F:protein-N-terminal-alanine acetyltransferase activity"/>
    <property type="evidence" value="ECO:0007669"/>
    <property type="project" value="TreeGrafter"/>
</dbReference>
<dbReference type="GO" id="GO:0010125">
    <property type="term" value="P:mycothiol biosynthetic process"/>
    <property type="evidence" value="ECO:0007669"/>
    <property type="project" value="UniProtKB-UniRule"/>
</dbReference>
<dbReference type="CDD" id="cd04301">
    <property type="entry name" value="NAT_SF"/>
    <property type="match status" value="1"/>
</dbReference>
<dbReference type="Gene3D" id="3.40.630.30">
    <property type="match status" value="1"/>
</dbReference>
<dbReference type="HAMAP" id="MF_01698">
    <property type="entry name" value="MshD"/>
    <property type="match status" value="1"/>
</dbReference>
<dbReference type="InterPro" id="IPR016181">
    <property type="entry name" value="Acyl_CoA_acyltransferase"/>
</dbReference>
<dbReference type="InterPro" id="IPR000182">
    <property type="entry name" value="GNAT_dom"/>
</dbReference>
<dbReference type="InterPro" id="IPR050276">
    <property type="entry name" value="MshD_Acetyltransferase"/>
</dbReference>
<dbReference type="InterPro" id="IPR017813">
    <property type="entry name" value="Mycothiol_AcTrfase"/>
</dbReference>
<dbReference type="NCBIfam" id="TIGR03448">
    <property type="entry name" value="mycothiol_MshD"/>
    <property type="match status" value="1"/>
</dbReference>
<dbReference type="PANTHER" id="PTHR43617">
    <property type="entry name" value="L-AMINO ACID N-ACETYLTRANSFERASE"/>
    <property type="match status" value="1"/>
</dbReference>
<dbReference type="PANTHER" id="PTHR43617:SF31">
    <property type="entry name" value="MYCOTHIOL ACETYLTRANSFERASE"/>
    <property type="match status" value="1"/>
</dbReference>
<dbReference type="Pfam" id="PF00583">
    <property type="entry name" value="Acetyltransf_1"/>
    <property type="match status" value="1"/>
</dbReference>
<dbReference type="Pfam" id="PF13508">
    <property type="entry name" value="Acetyltransf_7"/>
    <property type="match status" value="1"/>
</dbReference>
<dbReference type="PIRSF" id="PIRSF021524">
    <property type="entry name" value="MSH_acetyltransferase"/>
    <property type="match status" value="1"/>
</dbReference>
<dbReference type="SUPFAM" id="SSF55729">
    <property type="entry name" value="Acyl-CoA N-acyltransferases (Nat)"/>
    <property type="match status" value="2"/>
</dbReference>
<dbReference type="PROSITE" id="PS51186">
    <property type="entry name" value="GNAT"/>
    <property type="match status" value="2"/>
</dbReference>